<feature type="chain" id="PRO_0000307560" description="Triosephosphate isomerase">
    <location>
        <begin position="1"/>
        <end position="255"/>
    </location>
</feature>
<feature type="active site" description="Electrophile" evidence="1">
    <location>
        <position position="95"/>
    </location>
</feature>
<feature type="active site" description="Proton acceptor" evidence="1">
    <location>
        <position position="167"/>
    </location>
</feature>
<feature type="binding site" evidence="1">
    <location>
        <begin position="9"/>
        <end position="11"/>
    </location>
    <ligand>
        <name>substrate</name>
    </ligand>
</feature>
<feature type="binding site" evidence="1">
    <location>
        <position position="173"/>
    </location>
    <ligand>
        <name>substrate</name>
    </ligand>
</feature>
<feature type="binding site" evidence="1">
    <location>
        <position position="212"/>
    </location>
    <ligand>
        <name>substrate</name>
    </ligand>
</feature>
<feature type="binding site" evidence="1">
    <location>
        <begin position="233"/>
        <end position="234"/>
    </location>
    <ligand>
        <name>substrate</name>
    </ligand>
</feature>
<gene>
    <name evidence="1" type="primary">tpiA</name>
    <name type="ordered locus">SBO_3936</name>
</gene>
<sequence length="255" mass="26972">MRHPLVMGNWKLNGSRHMVHELVSNLRKELAGVAGCAVAIAPPEMYIDMAKREAEGSHIMLGAQNVDLNLSGAFTGETSAAMLKDIGAQYIIIGHSERRTYHKESDELIAKKFAVLKEQGLTPVLCIGETEAENEAGKTEEVCARQIDAVLKTQGAAAFEGAVIAYEPVWAIGTGKSATPAQAQAVHKFIRDHIAKVDANIAEQVIIQYGGSVNASNAAELFAQPDIDGALVGGASLKADAFAVIVKAAEAAKQA</sequence>
<reference key="1">
    <citation type="journal article" date="2005" name="Nucleic Acids Res.">
        <title>Genome dynamics and diversity of Shigella species, the etiologic agents of bacillary dysentery.</title>
        <authorList>
            <person name="Yang F."/>
            <person name="Yang J."/>
            <person name="Zhang X."/>
            <person name="Chen L."/>
            <person name="Jiang Y."/>
            <person name="Yan Y."/>
            <person name="Tang X."/>
            <person name="Wang J."/>
            <person name="Xiong Z."/>
            <person name="Dong J."/>
            <person name="Xue Y."/>
            <person name="Zhu Y."/>
            <person name="Xu X."/>
            <person name="Sun L."/>
            <person name="Chen S."/>
            <person name="Nie H."/>
            <person name="Peng J."/>
            <person name="Xu J."/>
            <person name="Wang Y."/>
            <person name="Yuan Z."/>
            <person name="Wen Y."/>
            <person name="Yao Z."/>
            <person name="Shen Y."/>
            <person name="Qiang B."/>
            <person name="Hou Y."/>
            <person name="Yu J."/>
            <person name="Jin Q."/>
        </authorList>
    </citation>
    <scope>NUCLEOTIDE SEQUENCE [LARGE SCALE GENOMIC DNA]</scope>
    <source>
        <strain>Sb227</strain>
    </source>
</reference>
<keyword id="KW-0963">Cytoplasm</keyword>
<keyword id="KW-0312">Gluconeogenesis</keyword>
<keyword id="KW-0324">Glycolysis</keyword>
<keyword id="KW-0413">Isomerase</keyword>
<proteinExistence type="inferred from homology"/>
<organism>
    <name type="scientific">Shigella boydii serotype 4 (strain Sb227)</name>
    <dbReference type="NCBI Taxonomy" id="300268"/>
    <lineage>
        <taxon>Bacteria</taxon>
        <taxon>Pseudomonadati</taxon>
        <taxon>Pseudomonadota</taxon>
        <taxon>Gammaproteobacteria</taxon>
        <taxon>Enterobacterales</taxon>
        <taxon>Enterobacteriaceae</taxon>
        <taxon>Shigella</taxon>
    </lineage>
</organism>
<name>TPIS_SHIBS</name>
<evidence type="ECO:0000255" key="1">
    <source>
        <dbReference type="HAMAP-Rule" id="MF_00147"/>
    </source>
</evidence>
<dbReference type="EC" id="5.3.1.1" evidence="1"/>
<dbReference type="EMBL" id="CP000036">
    <property type="protein sequence ID" value="ABB68387.1"/>
    <property type="molecule type" value="Genomic_DNA"/>
</dbReference>
<dbReference type="RefSeq" id="WP_001216325.1">
    <property type="nucleotide sequence ID" value="NC_007613.1"/>
</dbReference>
<dbReference type="SMR" id="Q31U71"/>
<dbReference type="GeneID" id="93777979"/>
<dbReference type="KEGG" id="sbo:SBO_3936"/>
<dbReference type="HOGENOM" id="CLU_024251_2_1_6"/>
<dbReference type="UniPathway" id="UPA00109">
    <property type="reaction ID" value="UER00189"/>
</dbReference>
<dbReference type="UniPathway" id="UPA00138"/>
<dbReference type="Proteomes" id="UP000007067">
    <property type="component" value="Chromosome"/>
</dbReference>
<dbReference type="GO" id="GO:0005829">
    <property type="term" value="C:cytosol"/>
    <property type="evidence" value="ECO:0007669"/>
    <property type="project" value="TreeGrafter"/>
</dbReference>
<dbReference type="GO" id="GO:0004807">
    <property type="term" value="F:triose-phosphate isomerase activity"/>
    <property type="evidence" value="ECO:0007669"/>
    <property type="project" value="UniProtKB-UniRule"/>
</dbReference>
<dbReference type="GO" id="GO:0006094">
    <property type="term" value="P:gluconeogenesis"/>
    <property type="evidence" value="ECO:0007669"/>
    <property type="project" value="UniProtKB-UniRule"/>
</dbReference>
<dbReference type="GO" id="GO:0046166">
    <property type="term" value="P:glyceraldehyde-3-phosphate biosynthetic process"/>
    <property type="evidence" value="ECO:0007669"/>
    <property type="project" value="TreeGrafter"/>
</dbReference>
<dbReference type="GO" id="GO:0019563">
    <property type="term" value="P:glycerol catabolic process"/>
    <property type="evidence" value="ECO:0007669"/>
    <property type="project" value="TreeGrafter"/>
</dbReference>
<dbReference type="GO" id="GO:0006096">
    <property type="term" value="P:glycolytic process"/>
    <property type="evidence" value="ECO:0007669"/>
    <property type="project" value="UniProtKB-UniRule"/>
</dbReference>
<dbReference type="CDD" id="cd00311">
    <property type="entry name" value="TIM"/>
    <property type="match status" value="1"/>
</dbReference>
<dbReference type="FunFam" id="3.20.20.70:FF:000020">
    <property type="entry name" value="Triosephosphate isomerase"/>
    <property type="match status" value="1"/>
</dbReference>
<dbReference type="Gene3D" id="3.20.20.70">
    <property type="entry name" value="Aldolase class I"/>
    <property type="match status" value="1"/>
</dbReference>
<dbReference type="HAMAP" id="MF_00147_B">
    <property type="entry name" value="TIM_B"/>
    <property type="match status" value="1"/>
</dbReference>
<dbReference type="InterPro" id="IPR013785">
    <property type="entry name" value="Aldolase_TIM"/>
</dbReference>
<dbReference type="InterPro" id="IPR035990">
    <property type="entry name" value="TIM_sf"/>
</dbReference>
<dbReference type="InterPro" id="IPR022896">
    <property type="entry name" value="TrioseP_Isoase_bac/euk"/>
</dbReference>
<dbReference type="InterPro" id="IPR000652">
    <property type="entry name" value="Triosephosphate_isomerase"/>
</dbReference>
<dbReference type="InterPro" id="IPR020861">
    <property type="entry name" value="Triosephosphate_isomerase_AS"/>
</dbReference>
<dbReference type="NCBIfam" id="TIGR00419">
    <property type="entry name" value="tim"/>
    <property type="match status" value="1"/>
</dbReference>
<dbReference type="PANTHER" id="PTHR21139">
    <property type="entry name" value="TRIOSEPHOSPHATE ISOMERASE"/>
    <property type="match status" value="1"/>
</dbReference>
<dbReference type="PANTHER" id="PTHR21139:SF42">
    <property type="entry name" value="TRIOSEPHOSPHATE ISOMERASE"/>
    <property type="match status" value="1"/>
</dbReference>
<dbReference type="Pfam" id="PF00121">
    <property type="entry name" value="TIM"/>
    <property type="match status" value="1"/>
</dbReference>
<dbReference type="SUPFAM" id="SSF51351">
    <property type="entry name" value="Triosephosphate isomerase (TIM)"/>
    <property type="match status" value="1"/>
</dbReference>
<dbReference type="PROSITE" id="PS00171">
    <property type="entry name" value="TIM_1"/>
    <property type="match status" value="1"/>
</dbReference>
<dbReference type="PROSITE" id="PS51440">
    <property type="entry name" value="TIM_2"/>
    <property type="match status" value="1"/>
</dbReference>
<comment type="function">
    <text evidence="1">Involved in the gluconeogenesis. Catalyzes stereospecifically the conversion of dihydroxyacetone phosphate (DHAP) to D-glyceraldehyde-3-phosphate (G3P).</text>
</comment>
<comment type="catalytic activity">
    <reaction evidence="1">
        <text>D-glyceraldehyde 3-phosphate = dihydroxyacetone phosphate</text>
        <dbReference type="Rhea" id="RHEA:18585"/>
        <dbReference type="ChEBI" id="CHEBI:57642"/>
        <dbReference type="ChEBI" id="CHEBI:59776"/>
        <dbReference type="EC" id="5.3.1.1"/>
    </reaction>
</comment>
<comment type="pathway">
    <text evidence="1">Carbohydrate biosynthesis; gluconeogenesis.</text>
</comment>
<comment type="pathway">
    <text evidence="1">Carbohydrate degradation; glycolysis; D-glyceraldehyde 3-phosphate from glycerone phosphate: step 1/1.</text>
</comment>
<comment type="subunit">
    <text evidence="1">Homodimer.</text>
</comment>
<comment type="subcellular location">
    <subcellularLocation>
        <location evidence="1">Cytoplasm</location>
    </subcellularLocation>
</comment>
<comment type="similarity">
    <text evidence="1">Belongs to the triosephosphate isomerase family.</text>
</comment>
<protein>
    <recommendedName>
        <fullName evidence="1">Triosephosphate isomerase</fullName>
        <shortName evidence="1">TIM</shortName>
        <shortName evidence="1">TPI</shortName>
        <ecNumber evidence="1">5.3.1.1</ecNumber>
    </recommendedName>
    <alternativeName>
        <fullName evidence="1">Triose-phosphate isomerase</fullName>
    </alternativeName>
</protein>
<accession>Q31U71</accession>